<sequence length="285" mass="32554">MAIPKLQAYALPESHDIPQNKVDWAFEPQRAALLIHDMQDYFVSFWGENCPMMEQVIANIAALRDYCKQHNIPVYYTAQPKEQSDEDRALLNDMWGPGLTRSPEQQKVVDRLTPDADDTVLVKWRYSAFHRSPLEQMLKESGRNQLIITGVYAHIGCMTTATDAFMRDIKPFMVADALADFSRDEHLMSLKYVAGRSGRVVMTEELLPAPIPASKAALREVILPLLDESDEPFDDDNLIDYGLDSVRMMALAARWRKVHGDIDFVMLAKNPTIDAWWKLLSREVK</sequence>
<accession>P0ADI5</accession>
<accession>P15048</accession>
<reference key="1">
    <citation type="journal article" date="2001" name="Nature">
        <title>Genome sequence of enterohaemorrhagic Escherichia coli O157:H7.</title>
        <authorList>
            <person name="Perna N.T."/>
            <person name="Plunkett G. III"/>
            <person name="Burland V."/>
            <person name="Mau B."/>
            <person name="Glasner J.D."/>
            <person name="Rose D.J."/>
            <person name="Mayhew G.F."/>
            <person name="Evans P.S."/>
            <person name="Gregor J."/>
            <person name="Kirkpatrick H.A."/>
            <person name="Posfai G."/>
            <person name="Hackett J."/>
            <person name="Klink S."/>
            <person name="Boutin A."/>
            <person name="Shao Y."/>
            <person name="Miller L."/>
            <person name="Grotbeck E.J."/>
            <person name="Davis N.W."/>
            <person name="Lim A."/>
            <person name="Dimalanta E.T."/>
            <person name="Potamousis K."/>
            <person name="Apodaca J."/>
            <person name="Anantharaman T.S."/>
            <person name="Lin J."/>
            <person name="Yen G."/>
            <person name="Schwartz D.C."/>
            <person name="Welch R.A."/>
            <person name="Blattner F.R."/>
        </authorList>
    </citation>
    <scope>NUCLEOTIDE SEQUENCE [LARGE SCALE GENOMIC DNA]</scope>
    <source>
        <strain>O157:H7 / EDL933 / ATCC 700927 / EHEC</strain>
    </source>
</reference>
<reference key="2">
    <citation type="journal article" date="2001" name="DNA Res.">
        <title>Complete genome sequence of enterohemorrhagic Escherichia coli O157:H7 and genomic comparison with a laboratory strain K-12.</title>
        <authorList>
            <person name="Hayashi T."/>
            <person name="Makino K."/>
            <person name="Ohnishi M."/>
            <person name="Kurokawa K."/>
            <person name="Ishii K."/>
            <person name="Yokoyama K."/>
            <person name="Han C.-G."/>
            <person name="Ohtsubo E."/>
            <person name="Nakayama K."/>
            <person name="Murata T."/>
            <person name="Tanaka M."/>
            <person name="Tobe T."/>
            <person name="Iida T."/>
            <person name="Takami H."/>
            <person name="Honda T."/>
            <person name="Sasakawa C."/>
            <person name="Ogasawara N."/>
            <person name="Yasunaga T."/>
            <person name="Kuhara S."/>
            <person name="Shiba T."/>
            <person name="Hattori M."/>
            <person name="Shinagawa H."/>
        </authorList>
    </citation>
    <scope>NUCLEOTIDE SEQUENCE [LARGE SCALE GENOMIC DNA]</scope>
    <source>
        <strain>O157:H7 / Sakai / RIMD 0509952 / EHEC</strain>
    </source>
</reference>
<name>ENTB_ECO57</name>
<keyword id="KW-0963">Cytoplasm</keyword>
<keyword id="KW-0259">Enterobactin biosynthesis</keyword>
<keyword id="KW-0378">Hydrolase</keyword>
<keyword id="KW-0436">Ligase</keyword>
<keyword id="KW-0460">Magnesium</keyword>
<keyword id="KW-0479">Metal-binding</keyword>
<keyword id="KW-0511">Multifunctional enzyme</keyword>
<keyword id="KW-0596">Phosphopantetheine</keyword>
<keyword id="KW-0597">Phosphoprotein</keyword>
<keyword id="KW-1185">Reference proteome</keyword>
<feature type="initiator methionine" description="Removed" evidence="1">
    <location>
        <position position="1"/>
    </location>
</feature>
<feature type="chain" id="PRO_0000201823" description="Enterobactin synthase component B">
    <location>
        <begin position="2"/>
        <end position="285"/>
    </location>
</feature>
<feature type="domain" description="Carrier" evidence="2">
    <location>
        <begin position="209"/>
        <end position="284"/>
    </location>
</feature>
<feature type="region of interest" description="Isochorismatase" evidence="1">
    <location>
        <begin position="2"/>
        <end position="213"/>
    </location>
</feature>
<feature type="binding site" evidence="1">
    <location>
        <position position="227"/>
    </location>
    <ligand>
        <name>Mg(2+)</name>
        <dbReference type="ChEBI" id="CHEBI:18420"/>
    </ligand>
</feature>
<feature type="binding site" evidence="1">
    <location>
        <position position="242"/>
    </location>
    <ligand>
        <name>Mg(2+)</name>
        <dbReference type="ChEBI" id="CHEBI:18420"/>
    </ligand>
</feature>
<feature type="binding site" evidence="1">
    <location>
        <position position="244"/>
    </location>
    <ligand>
        <name>Mg(2+)</name>
        <dbReference type="ChEBI" id="CHEBI:18420"/>
    </ligand>
</feature>
<feature type="modified residue" description="O-(pantetheine 4'-phosphoryl)serine" evidence="2">
    <location>
        <position position="245"/>
    </location>
</feature>
<evidence type="ECO:0000250" key="1">
    <source>
        <dbReference type="UniProtKB" id="P0ADI4"/>
    </source>
</evidence>
<evidence type="ECO:0000255" key="2">
    <source>
        <dbReference type="PROSITE-ProRule" id="PRU00258"/>
    </source>
</evidence>
<protein>
    <recommendedName>
        <fullName evidence="1">Enterobactin synthase component B</fullName>
        <ecNumber evidence="1">6.3.2.14</ecNumber>
    </recommendedName>
    <alternativeName>
        <fullName evidence="1">Enterobactin biosynthesis bifunctional protein EntB</fullName>
    </alternativeName>
    <alternativeName>
        <fullName evidence="1">Enterochelin synthase B</fullName>
    </alternativeName>
    <domain>
        <recommendedName>
            <fullName evidence="1">Isochorismatase</fullName>
            <ecNumber evidence="1">3.3.2.1</ecNumber>
        </recommendedName>
        <alternativeName>
            <fullName evidence="1">2,3-dihydro-2,3-dihydroxybenzoat synthase</fullName>
        </alternativeName>
        <alternativeName>
            <fullName evidence="1">Isochorismate lyase</fullName>
        </alternativeName>
    </domain>
    <domain>
        <recommendedName>
            <fullName evidence="1">Aryl carrier protein</fullName>
            <shortName evidence="1">ArCP</shortName>
        </recommendedName>
    </domain>
</protein>
<dbReference type="EC" id="6.3.2.14" evidence="1"/>
<dbReference type="EC" id="3.3.2.1" evidence="1"/>
<dbReference type="EMBL" id="AE005174">
    <property type="protein sequence ID" value="AAG54930.1"/>
    <property type="molecule type" value="Genomic_DNA"/>
</dbReference>
<dbReference type="EMBL" id="BA000007">
    <property type="protein sequence ID" value="BAB34057.1"/>
    <property type="molecule type" value="Genomic_DNA"/>
</dbReference>
<dbReference type="PIR" id="B90708">
    <property type="entry name" value="B90708"/>
</dbReference>
<dbReference type="PIR" id="F85558">
    <property type="entry name" value="F85558"/>
</dbReference>
<dbReference type="RefSeq" id="NP_308661.1">
    <property type="nucleotide sequence ID" value="NC_002695.1"/>
</dbReference>
<dbReference type="RefSeq" id="WP_001007138.1">
    <property type="nucleotide sequence ID" value="NZ_VOAI01000012.1"/>
</dbReference>
<dbReference type="SMR" id="P0ADI5"/>
<dbReference type="STRING" id="155864.Z0737"/>
<dbReference type="GeneID" id="916993"/>
<dbReference type="KEGG" id="ece:Z0737"/>
<dbReference type="KEGG" id="ecs:ECs_0634"/>
<dbReference type="PATRIC" id="fig|386585.9.peg.744"/>
<dbReference type="eggNOG" id="COG1535">
    <property type="taxonomic scope" value="Bacteria"/>
</dbReference>
<dbReference type="eggNOG" id="COG3433">
    <property type="taxonomic scope" value="Bacteria"/>
</dbReference>
<dbReference type="HOGENOM" id="CLU_068979_2_0_6"/>
<dbReference type="OMA" id="RDIKPFF"/>
<dbReference type="UniPathway" id="UPA00017"/>
<dbReference type="Proteomes" id="UP000000558">
    <property type="component" value="Chromosome"/>
</dbReference>
<dbReference type="Proteomes" id="UP000002519">
    <property type="component" value="Chromosome"/>
</dbReference>
<dbReference type="GO" id="GO:0005737">
    <property type="term" value="C:cytoplasm"/>
    <property type="evidence" value="ECO:0007669"/>
    <property type="project" value="UniProtKB-SubCell"/>
</dbReference>
<dbReference type="GO" id="GO:0047527">
    <property type="term" value="F:2,3-dihydroxybenzoate-serine ligase activity"/>
    <property type="evidence" value="ECO:0000250"/>
    <property type="project" value="UniProtKB"/>
</dbReference>
<dbReference type="GO" id="GO:0008908">
    <property type="term" value="F:isochorismatase activity"/>
    <property type="evidence" value="ECO:0000250"/>
    <property type="project" value="UniProtKB"/>
</dbReference>
<dbReference type="GO" id="GO:0000287">
    <property type="term" value="F:magnesium ion binding"/>
    <property type="evidence" value="ECO:0000250"/>
    <property type="project" value="UniProtKB"/>
</dbReference>
<dbReference type="GO" id="GO:0009239">
    <property type="term" value="P:enterobactin biosynthetic process"/>
    <property type="evidence" value="ECO:0000250"/>
    <property type="project" value="UniProtKB"/>
</dbReference>
<dbReference type="CDD" id="cd01013">
    <property type="entry name" value="isochorismatase"/>
    <property type="match status" value="1"/>
</dbReference>
<dbReference type="FunFam" id="1.10.1200.10:FF:000009">
    <property type="entry name" value="Isochorismatase"/>
    <property type="match status" value="1"/>
</dbReference>
<dbReference type="FunFam" id="3.40.50.850:FF:000002">
    <property type="entry name" value="Vibriobactin-specific isochorismatase"/>
    <property type="match status" value="1"/>
</dbReference>
<dbReference type="Gene3D" id="1.10.1200.10">
    <property type="entry name" value="ACP-like"/>
    <property type="match status" value="1"/>
</dbReference>
<dbReference type="Gene3D" id="3.40.50.850">
    <property type="entry name" value="Isochorismatase-like"/>
    <property type="match status" value="1"/>
</dbReference>
<dbReference type="InterPro" id="IPR036736">
    <property type="entry name" value="ACP-like_sf"/>
</dbReference>
<dbReference type="InterPro" id="IPR016291">
    <property type="entry name" value="Isochorismatase"/>
</dbReference>
<dbReference type="InterPro" id="IPR000868">
    <property type="entry name" value="Isochorismatase-like_dom"/>
</dbReference>
<dbReference type="InterPro" id="IPR050272">
    <property type="entry name" value="Isochorismatase-like_hydrls"/>
</dbReference>
<dbReference type="InterPro" id="IPR036380">
    <property type="entry name" value="Isochorismatase-like_sf"/>
</dbReference>
<dbReference type="InterPro" id="IPR009081">
    <property type="entry name" value="PP-bd_ACP"/>
</dbReference>
<dbReference type="PANTHER" id="PTHR43540:SF3">
    <property type="entry name" value="ENTEROBACTIN SYNTHASE COMPONENT B"/>
    <property type="match status" value="1"/>
</dbReference>
<dbReference type="PANTHER" id="PTHR43540">
    <property type="entry name" value="PEROXYUREIDOACRYLATE/UREIDOACRYLATE AMIDOHYDROLASE-RELATED"/>
    <property type="match status" value="1"/>
</dbReference>
<dbReference type="Pfam" id="PF00857">
    <property type="entry name" value="Isochorismatase"/>
    <property type="match status" value="1"/>
</dbReference>
<dbReference type="Pfam" id="PF00550">
    <property type="entry name" value="PP-binding"/>
    <property type="match status" value="1"/>
</dbReference>
<dbReference type="PIRSF" id="PIRSF001111">
    <property type="entry name" value="Isochorismatase"/>
    <property type="match status" value="1"/>
</dbReference>
<dbReference type="PRINTS" id="PR01398">
    <property type="entry name" value="ISCHRISMTASE"/>
</dbReference>
<dbReference type="SUPFAM" id="SSF47336">
    <property type="entry name" value="ACP-like"/>
    <property type="match status" value="1"/>
</dbReference>
<dbReference type="SUPFAM" id="SSF52499">
    <property type="entry name" value="Isochorismatase-like hydrolases"/>
    <property type="match status" value="1"/>
</dbReference>
<dbReference type="PROSITE" id="PS50075">
    <property type="entry name" value="CARRIER"/>
    <property type="match status" value="1"/>
</dbReference>
<organism>
    <name type="scientific">Escherichia coli O157:H7</name>
    <dbReference type="NCBI Taxonomy" id="83334"/>
    <lineage>
        <taxon>Bacteria</taxon>
        <taxon>Pseudomonadati</taxon>
        <taxon>Pseudomonadota</taxon>
        <taxon>Gammaproteobacteria</taxon>
        <taxon>Enterobacterales</taxon>
        <taxon>Enterobacteriaceae</taxon>
        <taxon>Escherichia</taxon>
    </lineage>
</organism>
<proteinExistence type="inferred from homology"/>
<comment type="function">
    <text evidence="1">Involved in the biosynthesis of the siderophore enterobactin (enterochelin), which is a macrocyclic trimeric lactone of N-(2,3-dihydroxybenzoyl)-serine. The serine trilactone serves as a scaffolding for the three catechol functionalities that provide hexadentate coordination for the tightly ligated iron(3+) atoms. EntB is a bifunctional protein that serves as an isochorismate lyase and an aryl carrier protein (ArCP). Catalyzes the conversion of isochorismate to 2,3-dihydro-2,3-dihydroxybenzoate (2,3-diDHB), the precursor of 2,3-dihydroxybenzoate (DHB). In the enterobactin assembly, EntB functions as an aryl carrier protein phosphopantetheinylated near the C terminus by EntD to yield holo-EntB, which is then acylated by EntE with 2,3-dihydroxybenzoyl-AMP to form DHB-holo-EntB. Then this product will serve in the formation of the amide bond between 2,3-dihydroxybenzoate (DHB) and L-serine.</text>
</comment>
<comment type="catalytic activity">
    <reaction evidence="1">
        <text>3 2,3-dihydroxybenzoate + 3 L-serine + 6 ATP = enterobactin + 6 AMP + 6 diphosphate + 4 H(+)</text>
        <dbReference type="Rhea" id="RHEA:30571"/>
        <dbReference type="ChEBI" id="CHEBI:15378"/>
        <dbReference type="ChEBI" id="CHEBI:30616"/>
        <dbReference type="ChEBI" id="CHEBI:33019"/>
        <dbReference type="ChEBI" id="CHEBI:33384"/>
        <dbReference type="ChEBI" id="CHEBI:36654"/>
        <dbReference type="ChEBI" id="CHEBI:77805"/>
        <dbReference type="ChEBI" id="CHEBI:456215"/>
        <dbReference type="EC" id="6.3.2.14"/>
    </reaction>
</comment>
<comment type="catalytic activity">
    <reaction evidence="1">
        <text>isochorismate + H2O = (2S,3S)-2,3-dihydroxy-2,3-dihydrobenzoate + pyruvate</text>
        <dbReference type="Rhea" id="RHEA:11112"/>
        <dbReference type="ChEBI" id="CHEBI:15361"/>
        <dbReference type="ChEBI" id="CHEBI:15377"/>
        <dbReference type="ChEBI" id="CHEBI:29780"/>
        <dbReference type="ChEBI" id="CHEBI:58764"/>
        <dbReference type="EC" id="3.3.2.1"/>
    </reaction>
</comment>
<comment type="cofactor">
    <cofactor evidence="1">
        <name>Mg(2+)</name>
        <dbReference type="ChEBI" id="CHEBI:18420"/>
    </cofactor>
</comment>
<comment type="pathway">
    <text evidence="1">Siderophore biosynthesis; enterobactin biosynthesis.</text>
</comment>
<comment type="subunit">
    <text evidence="1">Proteins EntB, EntD, EntE, and EntF form a multienzyme complex called enterobactin synthase. Homodimer. Also forms a specific pairwise interaction with EntC; this interaction likely facilitates substrate channeling to connect the EntB and EntC active sites.</text>
</comment>
<comment type="subcellular location">
    <subcellularLocation>
        <location evidence="1">Cytoplasm</location>
    </subcellularLocation>
</comment>
<comment type="induction">
    <text evidence="1">Under conditions of iron deficiency and by the fur protein.</text>
</comment>
<comment type="PTM">
    <text evidence="1">4'-phosphopantetheine is transferred from CoA to a specific serine of apo-EntB by EntD. Holo-EntB so formed is then acylated with 2,3-dihydroxybenzoate in a reaction catalyzed by EntE.</text>
</comment>
<comment type="similarity">
    <text evidence="1">In the N-terminal section; belongs to the isochorismatase family.</text>
</comment>
<gene>
    <name evidence="1" type="primary">entB</name>
    <name type="ordered locus">Z0737</name>
    <name type="ordered locus">ECs0634</name>
</gene>